<name>SRSF9_RAT</name>
<accession>Q5PPI1</accession>
<evidence type="ECO:0000250" key="1"/>
<evidence type="ECO:0000250" key="2">
    <source>
        <dbReference type="UniProtKB" id="Q13242"/>
    </source>
</evidence>
<evidence type="ECO:0000250" key="3">
    <source>
        <dbReference type="UniProtKB" id="Q9D0B0"/>
    </source>
</evidence>
<evidence type="ECO:0000255" key="4">
    <source>
        <dbReference type="PROSITE-ProRule" id="PRU00176"/>
    </source>
</evidence>
<evidence type="ECO:0000256" key="5">
    <source>
        <dbReference type="SAM" id="MobiDB-lite"/>
    </source>
</evidence>
<evidence type="ECO:0000305" key="6"/>
<evidence type="ECO:0007744" key="7">
    <source>
    </source>
</evidence>
<evidence type="ECO:0007744" key="8">
    <source>
    </source>
</evidence>
<proteinExistence type="evidence at protein level"/>
<dbReference type="EMBL" id="BC087684">
    <property type="protein sequence ID" value="AAH87684.1"/>
    <property type="molecule type" value="mRNA"/>
</dbReference>
<dbReference type="RefSeq" id="NP_001009255.1">
    <property type="nucleotide sequence ID" value="NM_001009255.1"/>
</dbReference>
<dbReference type="SMR" id="Q5PPI1"/>
<dbReference type="FunCoup" id="Q5PPI1">
    <property type="interactions" value="4477"/>
</dbReference>
<dbReference type="STRING" id="10116.ENSRNOP00000001539"/>
<dbReference type="iPTMnet" id="Q5PPI1"/>
<dbReference type="PhosphoSitePlus" id="Q5PPI1"/>
<dbReference type="PaxDb" id="10116-ENSRNOP00000001539"/>
<dbReference type="Ensembl" id="ENSRNOT00000001539.5">
    <property type="protein sequence ID" value="ENSRNOP00000001539.3"/>
    <property type="gene ID" value="ENSRNOG00000001163.5"/>
</dbReference>
<dbReference type="GeneID" id="288701"/>
<dbReference type="KEGG" id="rno:288701"/>
<dbReference type="UCSC" id="RGD:1309495">
    <property type="organism name" value="rat"/>
</dbReference>
<dbReference type="AGR" id="RGD:1309495"/>
<dbReference type="CTD" id="8683"/>
<dbReference type="RGD" id="1309495">
    <property type="gene designation" value="Srsf9"/>
</dbReference>
<dbReference type="eggNOG" id="KOG0105">
    <property type="taxonomic scope" value="Eukaryota"/>
</dbReference>
<dbReference type="GeneTree" id="ENSGT00940000156839"/>
<dbReference type="HOGENOM" id="CLU_012062_34_0_1"/>
<dbReference type="InParanoid" id="Q5PPI1"/>
<dbReference type="OMA" id="FPEPREN"/>
<dbReference type="OrthoDB" id="1099063at2759"/>
<dbReference type="PhylomeDB" id="Q5PPI1"/>
<dbReference type="TreeFam" id="TF106261"/>
<dbReference type="Reactome" id="R-RNO-159236">
    <property type="pathway name" value="Transport of Mature mRNA derived from an Intron-Containing Transcript"/>
</dbReference>
<dbReference type="Reactome" id="R-RNO-72163">
    <property type="pathway name" value="mRNA Splicing - Major Pathway"/>
</dbReference>
<dbReference type="Reactome" id="R-RNO-72187">
    <property type="pathway name" value="mRNA 3'-end processing"/>
</dbReference>
<dbReference type="Reactome" id="R-RNO-72203">
    <property type="pathway name" value="Processing of Capped Intron-Containing Pre-mRNA"/>
</dbReference>
<dbReference type="Reactome" id="R-RNO-73856">
    <property type="pathway name" value="RNA Polymerase II Transcription Termination"/>
</dbReference>
<dbReference type="PRO" id="PR:Q5PPI1"/>
<dbReference type="Proteomes" id="UP000002494">
    <property type="component" value="Chromosome 12"/>
</dbReference>
<dbReference type="Bgee" id="ENSRNOG00000001163">
    <property type="expression patterns" value="Expressed in ovary and 20 other cell types or tissues"/>
</dbReference>
<dbReference type="GO" id="GO:0016607">
    <property type="term" value="C:nuclear speck"/>
    <property type="evidence" value="ECO:0000318"/>
    <property type="project" value="GO_Central"/>
</dbReference>
<dbReference type="GO" id="GO:0019904">
    <property type="term" value="F:protein domain specific binding"/>
    <property type="evidence" value="ECO:0000266"/>
    <property type="project" value="RGD"/>
</dbReference>
<dbReference type="GO" id="GO:0003723">
    <property type="term" value="F:RNA binding"/>
    <property type="evidence" value="ECO:0000318"/>
    <property type="project" value="GO_Central"/>
</dbReference>
<dbReference type="GO" id="GO:0000380">
    <property type="term" value="P:alternative mRNA splicing, via spliceosome"/>
    <property type="evidence" value="ECO:0000318"/>
    <property type="project" value="GO_Central"/>
</dbReference>
<dbReference type="GO" id="GO:0048025">
    <property type="term" value="P:negative regulation of mRNA splicing, via spliceosome"/>
    <property type="evidence" value="ECO:0000250"/>
    <property type="project" value="UniProtKB"/>
</dbReference>
<dbReference type="GO" id="GO:0043279">
    <property type="term" value="P:response to alkaloid"/>
    <property type="evidence" value="ECO:0000270"/>
    <property type="project" value="RGD"/>
</dbReference>
<dbReference type="GO" id="GO:0009636">
    <property type="term" value="P:response to toxic substance"/>
    <property type="evidence" value="ECO:0000270"/>
    <property type="project" value="RGD"/>
</dbReference>
<dbReference type="CDD" id="cd12598">
    <property type="entry name" value="RRM1_SRSF9"/>
    <property type="match status" value="1"/>
</dbReference>
<dbReference type="CDD" id="cd12768">
    <property type="entry name" value="RRM2_SRSF9"/>
    <property type="match status" value="1"/>
</dbReference>
<dbReference type="FunFam" id="3.30.70.330:FF:000053">
    <property type="entry name" value="Serine/arginine-rich splicing factor 1"/>
    <property type="match status" value="1"/>
</dbReference>
<dbReference type="FunFam" id="3.30.70.330:FF:000345">
    <property type="entry name" value="Serine/arginine-rich splicing factor 9"/>
    <property type="match status" value="1"/>
</dbReference>
<dbReference type="Gene3D" id="3.30.70.330">
    <property type="match status" value="2"/>
</dbReference>
<dbReference type="InterPro" id="IPR012677">
    <property type="entry name" value="Nucleotide-bd_a/b_plait_sf"/>
</dbReference>
<dbReference type="InterPro" id="IPR035979">
    <property type="entry name" value="RBD_domain_sf"/>
</dbReference>
<dbReference type="InterPro" id="IPR000504">
    <property type="entry name" value="RRM_dom"/>
</dbReference>
<dbReference type="InterPro" id="IPR050374">
    <property type="entry name" value="RRT5_SRSF_SR"/>
</dbReference>
<dbReference type="InterPro" id="IPR034503">
    <property type="entry name" value="SRSF9_RRM1"/>
</dbReference>
<dbReference type="InterPro" id="IPR034995">
    <property type="entry name" value="SRSF9_RRM2"/>
</dbReference>
<dbReference type="PANTHER" id="PTHR23003">
    <property type="entry name" value="RNA RECOGNITION MOTIF RRM DOMAIN CONTAINING PROTEIN"/>
    <property type="match status" value="1"/>
</dbReference>
<dbReference type="PANTHER" id="PTHR23003:SF65">
    <property type="entry name" value="RRM DOMAIN-CONTAINING PROTEIN"/>
    <property type="match status" value="1"/>
</dbReference>
<dbReference type="Pfam" id="PF00076">
    <property type="entry name" value="RRM_1"/>
    <property type="match status" value="2"/>
</dbReference>
<dbReference type="SMART" id="SM00360">
    <property type="entry name" value="RRM"/>
    <property type="match status" value="2"/>
</dbReference>
<dbReference type="SUPFAM" id="SSF54928">
    <property type="entry name" value="RNA-binding domain, RBD"/>
    <property type="match status" value="1"/>
</dbReference>
<dbReference type="PROSITE" id="PS50102">
    <property type="entry name" value="RRM"/>
    <property type="match status" value="2"/>
</dbReference>
<gene>
    <name type="primary">Srsf9</name>
    <name type="synonym">Sfrs9</name>
</gene>
<sequence>MSGWADERGGEGDGRIYVGNLPTDVREKDLEDLFYKYGRIREIELKNRHGLVPFAFVRFEDPRDAEDAIYGRNGYDYGQCRLRVEFPRAYGGRGGWPRASRNGPPTRRSDFRVLVSGLPPSGSWQDLKDHMREAGDVCYADVQKDGMGMVEYLRKEDMEYALRKLDDTKFRSHEGETSYIRVYPERGTSYGCSRSRSGSRGRDSPYQSRGSPHYFSPFRPY</sequence>
<reference key="1">
    <citation type="journal article" date="2004" name="Genome Res.">
        <title>The status, quality, and expansion of the NIH full-length cDNA project: the Mammalian Gene Collection (MGC).</title>
        <authorList>
            <consortium name="The MGC Project Team"/>
        </authorList>
    </citation>
    <scope>NUCLEOTIDE SEQUENCE [LARGE SCALE MRNA]</scope>
    <source>
        <tissue>Ovary</tissue>
    </source>
</reference>
<reference key="2">
    <citation type="journal article" date="2001" name="J. Biol. Chem.">
        <title>The STAR/GSG family protein rSLM-2 regulates the selection of alternative splice sites.</title>
        <authorList>
            <person name="Stoss O."/>
            <person name="Olbrich M."/>
            <person name="Hartmann A.M."/>
            <person name="Koenig H."/>
            <person name="Memmott J."/>
            <person name="Andreadis A."/>
            <person name="Stamm S."/>
        </authorList>
    </citation>
    <scope>INTERACTION WITH KHDRBS3</scope>
</reference>
<reference key="3">
    <citation type="journal article" date="2006" name="Proc. Natl. Acad. Sci. U.S.A.">
        <title>Quantitative phosphoproteomics of vasopressin-sensitive renal cells: regulation of aquaporin-2 phosphorylation at two sites.</title>
        <authorList>
            <person name="Hoffert J.D."/>
            <person name="Pisitkun T."/>
            <person name="Wang G."/>
            <person name="Shen R.-F."/>
            <person name="Knepper M.A."/>
        </authorList>
    </citation>
    <scope>PHOSPHORYLATION [LARGE SCALE ANALYSIS] AT SER-211</scope>
    <scope>IDENTIFICATION BY MASS SPECTROMETRY [LARGE SCALE ANALYSIS]</scope>
</reference>
<reference key="4">
    <citation type="journal article" date="2012" name="Nat. Commun.">
        <title>Quantitative maps of protein phosphorylation sites across 14 different rat organs and tissues.</title>
        <authorList>
            <person name="Lundby A."/>
            <person name="Secher A."/>
            <person name="Lage K."/>
            <person name="Nordsborg N.B."/>
            <person name="Dmytriyev A."/>
            <person name="Lundby C."/>
            <person name="Olsen J.V."/>
        </authorList>
    </citation>
    <scope>PHOSPHORYLATION [LARGE SCALE ANALYSIS] AT SER-204; SER-211 AND SER-216</scope>
    <scope>IDENTIFICATION BY MASS SPECTROMETRY [LARGE SCALE ANALYSIS]</scope>
</reference>
<protein>
    <recommendedName>
        <fullName>Serine/arginine-rich splicing factor 9</fullName>
    </recommendedName>
    <alternativeName>
        <fullName>Splicing factor, arginine/serine-rich 9</fullName>
    </alternativeName>
</protein>
<keyword id="KW-1017">Isopeptide bond</keyword>
<keyword id="KW-0507">mRNA processing</keyword>
<keyword id="KW-0508">mRNA splicing</keyword>
<keyword id="KW-0539">Nucleus</keyword>
<keyword id="KW-0597">Phosphoprotein</keyword>
<keyword id="KW-1185">Reference proteome</keyword>
<keyword id="KW-0677">Repeat</keyword>
<keyword id="KW-0678">Repressor</keyword>
<keyword id="KW-0694">RNA-binding</keyword>
<keyword id="KW-0832">Ubl conjugation</keyword>
<organism>
    <name type="scientific">Rattus norvegicus</name>
    <name type="common">Rat</name>
    <dbReference type="NCBI Taxonomy" id="10116"/>
    <lineage>
        <taxon>Eukaryota</taxon>
        <taxon>Metazoa</taxon>
        <taxon>Chordata</taxon>
        <taxon>Craniata</taxon>
        <taxon>Vertebrata</taxon>
        <taxon>Euteleostomi</taxon>
        <taxon>Mammalia</taxon>
        <taxon>Eutheria</taxon>
        <taxon>Euarchontoglires</taxon>
        <taxon>Glires</taxon>
        <taxon>Rodentia</taxon>
        <taxon>Myomorpha</taxon>
        <taxon>Muroidea</taxon>
        <taxon>Muridae</taxon>
        <taxon>Murinae</taxon>
        <taxon>Rattus</taxon>
    </lineage>
</organism>
<comment type="function">
    <text evidence="1">Plays a role in constitutive splicing and can modulate the selection of alternative splice sites. Represses the splicing of MAPT/Tau exon 10 (By similarity).</text>
</comment>
<comment type="subunit">
    <text evidence="2 3">Interacts with KHDRBS3. Interacts with HABP4. Interacts with NOL3/ARC/NOP30. Interacts with NSEP1/YB-1/YB1. Interacts with SAFB/SAFB1. Interacts with SRSF6/SFRS6. Interacts with TRA2B/SFRS10. Interacts with C1QBP. May also interact with DUSP11/PIR1.</text>
</comment>
<comment type="subcellular location">
    <subcellularLocation>
        <location evidence="1">Nucleus</location>
    </subcellularLocation>
</comment>
<comment type="PTM">
    <text evidence="1">Extensively phosphorylated on serine residues in the RS domain.</text>
</comment>
<comment type="similarity">
    <text evidence="6">Belongs to the splicing factor SR family.</text>
</comment>
<feature type="chain" id="PRO_0000081937" description="Serine/arginine-rich splicing factor 9">
    <location>
        <begin position="1"/>
        <end position="221"/>
    </location>
</feature>
<feature type="domain" description="RRM 1" evidence="4">
    <location>
        <begin position="14"/>
        <end position="89"/>
    </location>
</feature>
<feature type="domain" description="RRM 2" evidence="4">
    <location>
        <begin position="111"/>
        <end position="187"/>
    </location>
</feature>
<feature type="region of interest" description="Disordered" evidence="5">
    <location>
        <begin position="187"/>
        <end position="221"/>
    </location>
</feature>
<feature type="region of interest" description="Interaction with SAFB1" evidence="1">
    <location>
        <begin position="188"/>
        <end position="200"/>
    </location>
</feature>
<feature type="compositionally biased region" description="Low complexity" evidence="5">
    <location>
        <begin position="187"/>
        <end position="198"/>
    </location>
</feature>
<feature type="modified residue" description="Phosphoserine" evidence="2">
    <location>
        <position position="189"/>
    </location>
</feature>
<feature type="modified residue" description="Phosphoserine" evidence="2">
    <location>
        <position position="193"/>
    </location>
</feature>
<feature type="modified residue" description="Phosphoserine" evidence="2">
    <location>
        <position position="195"/>
    </location>
</feature>
<feature type="modified residue" description="Phosphoserine" evidence="8">
    <location>
        <position position="204"/>
    </location>
</feature>
<feature type="modified residue" description="Phosphoserine" evidence="2">
    <location>
        <position position="208"/>
    </location>
</feature>
<feature type="modified residue" description="Phosphoserine" evidence="7 8">
    <location>
        <position position="211"/>
    </location>
</feature>
<feature type="modified residue" description="Phosphotyrosine" evidence="2">
    <location>
        <position position="214"/>
    </location>
</feature>
<feature type="modified residue" description="Phosphoserine" evidence="8">
    <location>
        <position position="216"/>
    </location>
</feature>
<feature type="cross-link" description="Glycyl lysine isopeptide (Lys-Gly) (interchain with G-Cter in SUMO2)" evidence="2">
    <location>
        <position position="36"/>
    </location>
</feature>